<feature type="chain" id="PRO_0000319881" description="Carbonyl reductase family member 4">
    <location>
        <begin position="1"/>
        <end position="237"/>
    </location>
</feature>
<feature type="active site" description="Proton acceptor" evidence="2">
    <location>
        <position position="148"/>
    </location>
</feature>
<feature type="binding site" evidence="1">
    <location>
        <begin position="11"/>
        <end position="14"/>
    </location>
    <ligand>
        <name>NADP(+)</name>
        <dbReference type="ChEBI" id="CHEBI:58349"/>
    </ligand>
</feature>
<feature type="binding site" evidence="1">
    <location>
        <begin position="34"/>
        <end position="35"/>
    </location>
    <ligand>
        <name>NADP(+)</name>
        <dbReference type="ChEBI" id="CHEBI:58349"/>
    </ligand>
</feature>
<feature type="binding site" evidence="1">
    <location>
        <position position="57"/>
    </location>
    <ligand>
        <name>NADP(+)</name>
        <dbReference type="ChEBI" id="CHEBI:58349"/>
    </ligand>
</feature>
<feature type="binding site" evidence="1">
    <location>
        <begin position="84"/>
        <end position="86"/>
    </location>
    <ligand>
        <name>NADP(+)</name>
        <dbReference type="ChEBI" id="CHEBI:58349"/>
    </ligand>
</feature>
<feature type="binding site" evidence="1">
    <location>
        <position position="135"/>
    </location>
    <ligand>
        <name>substrate</name>
    </ligand>
</feature>
<feature type="binding site" evidence="1">
    <location>
        <position position="148"/>
    </location>
    <ligand>
        <name>NADP(+)</name>
        <dbReference type="ChEBI" id="CHEBI:58349"/>
    </ligand>
</feature>
<feature type="binding site" evidence="1">
    <location>
        <position position="152"/>
    </location>
    <ligand>
        <name>NADP(+)</name>
        <dbReference type="ChEBI" id="CHEBI:58349"/>
    </ligand>
</feature>
<feature type="binding site" evidence="1">
    <location>
        <begin position="181"/>
        <end position="183"/>
    </location>
    <ligand>
        <name>NADP(+)</name>
        <dbReference type="ChEBI" id="CHEBI:58349"/>
    </ligand>
</feature>
<sequence>MSRLAVVFGGSRGIGRAASKLLAQRGHRIVLLSRNKEAAQSTAQSLPGENHLGLSCDVSKEEEVQKAFETINKTCGTVGFLVNAAGINRDALLLRSKSEDMLSVLHTNLLGSMLTCKAAVRNMLSHGGAIVNIGSVVGVKGNAGQCVYSASKAGLEGFTRSLAKEVASRNIRVNLVAPGLIHTDMTAGLAEEAAVRTIPLGRFGEPAEVAQAMLFLLESPYITGQILLVDGGLQLLM</sequence>
<keyword id="KW-0275">Fatty acid biosynthesis</keyword>
<keyword id="KW-0276">Fatty acid metabolism</keyword>
<keyword id="KW-0444">Lipid biosynthesis</keyword>
<keyword id="KW-0443">Lipid metabolism</keyword>
<keyword id="KW-0496">Mitochondrion</keyword>
<keyword id="KW-0520">NAD</keyword>
<keyword id="KW-0521">NADP</keyword>
<keyword id="KW-0560">Oxidoreductase</keyword>
<keyword id="KW-1185">Reference proteome</keyword>
<protein>
    <recommendedName>
        <fullName>Carbonyl reductase family member 4</fullName>
        <ecNumber>1.-.-.-</ecNumber>
    </recommendedName>
    <alternativeName>
        <fullName evidence="1">3-ketoacyl-[acyl-carrier-protein] reductase beta subunit</fullName>
        <shortName evidence="1">KAR beta subunit</shortName>
    </alternativeName>
    <alternativeName>
        <fullName>3-oxoacyl-[acyl-carrier-protein] reductase</fullName>
        <ecNumber evidence="1">1.1.1.-</ecNumber>
    </alternativeName>
    <alternativeName>
        <fullName>Quinone reductase CBR4</fullName>
    </alternativeName>
</protein>
<proteinExistence type="evidence at transcript level"/>
<evidence type="ECO:0000250" key="1">
    <source>
        <dbReference type="UniProtKB" id="Q8N4T8"/>
    </source>
</evidence>
<evidence type="ECO:0000255" key="2">
    <source>
        <dbReference type="PROSITE-ProRule" id="PRU10001"/>
    </source>
</evidence>
<evidence type="ECO:0000305" key="3"/>
<organism>
    <name type="scientific">Danio rerio</name>
    <name type="common">Zebrafish</name>
    <name type="synonym">Brachydanio rerio</name>
    <dbReference type="NCBI Taxonomy" id="7955"/>
    <lineage>
        <taxon>Eukaryota</taxon>
        <taxon>Metazoa</taxon>
        <taxon>Chordata</taxon>
        <taxon>Craniata</taxon>
        <taxon>Vertebrata</taxon>
        <taxon>Euteleostomi</taxon>
        <taxon>Actinopterygii</taxon>
        <taxon>Neopterygii</taxon>
        <taxon>Teleostei</taxon>
        <taxon>Ostariophysi</taxon>
        <taxon>Cypriniformes</taxon>
        <taxon>Danionidae</taxon>
        <taxon>Danioninae</taxon>
        <taxon>Danio</taxon>
    </lineage>
</organism>
<name>CBR4_DANRE</name>
<gene>
    <name type="primary">cbr4</name>
    <name type="ORF">zgc:77144</name>
</gene>
<reference key="1">
    <citation type="submission" date="2004-01" db="EMBL/GenBank/DDBJ databases">
        <authorList>
            <consortium name="NIH - Zebrafish Gene Collection (ZGC) project"/>
        </authorList>
    </citation>
    <scope>NUCLEOTIDE SEQUENCE [LARGE SCALE MRNA]</scope>
    <source>
        <tissue>Kidney</tissue>
    </source>
</reference>
<accession>Q6P0H7</accession>
<dbReference type="EC" id="1.-.-.-"/>
<dbReference type="EC" id="1.1.1.-" evidence="1"/>
<dbReference type="EMBL" id="BC065615">
    <property type="protein sequence ID" value="AAH65615.1"/>
    <property type="molecule type" value="mRNA"/>
</dbReference>
<dbReference type="SMR" id="Q6P0H7"/>
<dbReference type="FunCoup" id="Q6P0H7">
    <property type="interactions" value="675"/>
</dbReference>
<dbReference type="STRING" id="7955.ENSDARP00000010074"/>
<dbReference type="PaxDb" id="7955-ENSDARP00000010074"/>
<dbReference type="AGR" id="ZFIN:ZDB-GENE-040426-1796"/>
<dbReference type="ZFIN" id="ZDB-GENE-040426-1796">
    <property type="gene designation" value="cbr4"/>
</dbReference>
<dbReference type="eggNOG" id="KOG1200">
    <property type="taxonomic scope" value="Eukaryota"/>
</dbReference>
<dbReference type="InParanoid" id="Q6P0H7"/>
<dbReference type="PhylomeDB" id="Q6P0H7"/>
<dbReference type="Reactome" id="R-DRE-75105">
    <property type="pathway name" value="Fatty acyl-CoA biosynthesis"/>
</dbReference>
<dbReference type="UniPathway" id="UPA00094"/>
<dbReference type="PRO" id="PR:Q6P0H7"/>
<dbReference type="Proteomes" id="UP000000437">
    <property type="component" value="Unplaced"/>
</dbReference>
<dbReference type="GO" id="GO:0005759">
    <property type="term" value="C:mitochondrial matrix"/>
    <property type="evidence" value="ECO:0000250"/>
    <property type="project" value="UniProtKB"/>
</dbReference>
<dbReference type="GO" id="GO:1990204">
    <property type="term" value="C:oxidoreductase complex"/>
    <property type="evidence" value="ECO:0000250"/>
    <property type="project" value="UniProtKB"/>
</dbReference>
<dbReference type="GO" id="GO:0004316">
    <property type="term" value="F:3-oxoacyl-[acyl-carrier-protein] reductase (NADPH) activity"/>
    <property type="evidence" value="ECO:0000250"/>
    <property type="project" value="UniProtKB"/>
</dbReference>
<dbReference type="GO" id="GO:0016616">
    <property type="term" value="F:oxidoreductase activity, acting on the CH-OH group of donors, NAD or NADP as acceptor"/>
    <property type="evidence" value="ECO:0000318"/>
    <property type="project" value="GO_Central"/>
</dbReference>
<dbReference type="GO" id="GO:0048038">
    <property type="term" value="F:quinone binding"/>
    <property type="evidence" value="ECO:0000318"/>
    <property type="project" value="GO_Central"/>
</dbReference>
<dbReference type="GO" id="GO:0006633">
    <property type="term" value="P:fatty acid biosynthetic process"/>
    <property type="evidence" value="ECO:0000250"/>
    <property type="project" value="UniProtKB"/>
</dbReference>
<dbReference type="GO" id="GO:0051290">
    <property type="term" value="P:protein heterotetramerization"/>
    <property type="evidence" value="ECO:0000250"/>
    <property type="project" value="UniProtKB"/>
</dbReference>
<dbReference type="FunFam" id="3.40.50.720:FF:000285">
    <property type="entry name" value="Carbonyl reductase family member 4"/>
    <property type="match status" value="1"/>
</dbReference>
<dbReference type="Gene3D" id="3.40.50.720">
    <property type="entry name" value="NAD(P)-binding Rossmann-like Domain"/>
    <property type="match status" value="1"/>
</dbReference>
<dbReference type="InterPro" id="IPR036291">
    <property type="entry name" value="NAD(P)-bd_dom_sf"/>
</dbReference>
<dbReference type="InterPro" id="IPR020904">
    <property type="entry name" value="Sc_DH/Rdtase_CS"/>
</dbReference>
<dbReference type="InterPro" id="IPR002347">
    <property type="entry name" value="SDR_fam"/>
</dbReference>
<dbReference type="NCBIfam" id="NF009466">
    <property type="entry name" value="PRK12826.1-2"/>
    <property type="match status" value="1"/>
</dbReference>
<dbReference type="PANTHER" id="PTHR42760:SF133">
    <property type="entry name" value="3-OXOACYL-[ACYL-CARRIER-PROTEIN] REDUCTASE"/>
    <property type="match status" value="1"/>
</dbReference>
<dbReference type="PANTHER" id="PTHR42760">
    <property type="entry name" value="SHORT-CHAIN DEHYDROGENASES/REDUCTASES FAMILY MEMBER"/>
    <property type="match status" value="1"/>
</dbReference>
<dbReference type="Pfam" id="PF13561">
    <property type="entry name" value="adh_short_C2"/>
    <property type="match status" value="1"/>
</dbReference>
<dbReference type="PRINTS" id="PR00081">
    <property type="entry name" value="GDHRDH"/>
</dbReference>
<dbReference type="PRINTS" id="PR00080">
    <property type="entry name" value="SDRFAMILY"/>
</dbReference>
<dbReference type="SMART" id="SM00822">
    <property type="entry name" value="PKS_KR"/>
    <property type="match status" value="1"/>
</dbReference>
<dbReference type="SUPFAM" id="SSF51735">
    <property type="entry name" value="NAD(P)-binding Rossmann-fold domains"/>
    <property type="match status" value="1"/>
</dbReference>
<dbReference type="PROSITE" id="PS00061">
    <property type="entry name" value="ADH_SHORT"/>
    <property type="match status" value="1"/>
</dbReference>
<comment type="function">
    <text evidence="1">The heterotetramer with HSD17B8 has NADH-dependent 3-ketoacyl-acyl carrier protein reductase activity, and thereby plays a role in mitochondrial fatty acid biosynthesis. Within the heterotetramer, HSD17B8 binds NADH; CBR4 binds NADPD. The homotetramer has NADPH-dependent quinone reductase activity. Both homotetramer and the heterotetramer have broad in vitro substrate specificity and can reduce 9,10-phenanthrenequinone, 1,4-benzoquinone and various other o-quinones and p-quinones.</text>
</comment>
<comment type="pathway">
    <text evidence="1">Lipid metabolism; fatty acid biosynthesis.</text>
</comment>
<comment type="subunit">
    <text evidence="1">Homotetramer (in vitro). Heterotetramer with HSD17B8; contains two molecules each of HSD17B8 and CBR4.</text>
</comment>
<comment type="subcellular location">
    <subcellularLocation>
        <location evidence="1">Mitochondrion matrix</location>
    </subcellularLocation>
</comment>
<comment type="similarity">
    <text evidence="3">Belongs to the short-chain dehydrogenases/reductases (SDR) family.</text>
</comment>